<name>HEMA_INBME</name>
<feature type="chain" id="PRO_0000440761" description="Hemagglutinin HA1 chain" evidence="1">
    <location>
        <begin position="1"/>
        <end position="355"/>
    </location>
</feature>
<feature type="chain" id="PRO_0000039119" description="Hemagglutinin HA2 chain" evidence="1">
    <location>
        <begin position="356"/>
        <end position="578"/>
    </location>
</feature>
<feature type="topological domain" description="Extracellular" evidence="1">
    <location>
        <begin position="1"/>
        <end position="546"/>
    </location>
</feature>
<feature type="transmembrane region" description="Helical" evidence="1">
    <location>
        <begin position="547"/>
        <end position="567"/>
    </location>
</feature>
<feature type="topological domain" description="Cytoplasmic" evidence="1">
    <location>
        <begin position="568"/>
        <end position="578"/>
    </location>
</feature>
<feature type="site" description="Cleavage; by host" evidence="1">
    <location>
        <begin position="355"/>
        <end position="356"/>
    </location>
</feature>
<feature type="lipid moiety-binding region" description="S-palmitoyl cysteine; by host" evidence="1">
    <location>
        <position position="574"/>
    </location>
</feature>
<feature type="lipid moiety-binding region" description="S-palmitoyl cysteine; by host" evidence="1">
    <location>
        <position position="577"/>
    </location>
</feature>
<feature type="glycosylation site" description="N-linked (GlcNAc...) asparagine; by host" evidence="1">
    <location>
        <position position="33"/>
    </location>
</feature>
<feature type="glycosylation site" description="N-linked (GlcNAc...) asparagine; by host" evidence="1">
    <location>
        <position position="67"/>
    </location>
</feature>
<feature type="glycosylation site" description="N-linked (GlcNAc...) asparagine; by host" evidence="1">
    <location>
        <position position="153"/>
    </location>
</feature>
<feature type="glycosylation site" description="N-linked (GlcNAc...) asparagine; by host" evidence="1">
    <location>
        <position position="174"/>
    </location>
</feature>
<feature type="glycosylation site" description="N-linked (GlcNAc...) asparagine; by host" evidence="1">
    <location>
        <position position="312"/>
    </location>
</feature>
<feature type="glycosylation site" description="N-linked (GlcNAc...) asparagine; by host" evidence="1">
    <location>
        <position position="341"/>
    </location>
</feature>
<feature type="glycosylation site" description="N-linked (GlcNAc...) asparagine; by host" evidence="1">
    <location>
        <position position="500"/>
    </location>
</feature>
<feature type="glycosylation site" description="N-linked (GlcNAc...) asparagine; by host" evidence="1">
    <location>
        <position position="526"/>
    </location>
</feature>
<feature type="glycosylation site" description="N-linked (GlcNAc...) asparagine; by host" evidence="1">
    <location>
        <position position="539"/>
    </location>
</feature>
<feature type="disulfide bond" description="Interchain (between HA1 and HA2 chains)" evidence="1">
    <location>
        <begin position="12"/>
        <end position="492"/>
    </location>
</feature>
<feature type="disulfide bond" evidence="1">
    <location>
        <begin position="68"/>
        <end position="80"/>
    </location>
</feature>
<feature type="disulfide bond" evidence="1">
    <location>
        <begin position="102"/>
        <end position="151"/>
    </location>
</feature>
<feature type="disulfide bond" evidence="1">
    <location>
        <begin position="499"/>
        <end position="503"/>
    </location>
</feature>
<feature type="non-terminal residue">
    <location>
        <position position="1"/>
    </location>
</feature>
<evidence type="ECO:0000255" key="1">
    <source>
        <dbReference type="HAMAP-Rule" id="MF_04072"/>
    </source>
</evidence>
<protein>
    <recommendedName>
        <fullName evidence="1">Hemagglutinin</fullName>
    </recommendedName>
    <component>
        <recommendedName>
            <fullName evidence="1">Hemagglutinin HA1 chain</fullName>
        </recommendedName>
    </component>
    <component>
        <recommendedName>
            <fullName evidence="1">Hemagglutinin HA2 chain</fullName>
        </recommendedName>
    </component>
</protein>
<organismHost>
    <name type="scientific">Homo sapiens</name>
    <name type="common">Human</name>
    <dbReference type="NCBI Taxonomy" id="9606"/>
</organismHost>
<organism>
    <name type="scientific">Influenza B virus (strain B/Memphis/6/1986)</name>
    <dbReference type="NCBI Taxonomy" id="11538"/>
    <lineage>
        <taxon>Viruses</taxon>
        <taxon>Riboviria</taxon>
        <taxon>Orthornavirae</taxon>
        <taxon>Negarnaviricota</taxon>
        <taxon>Polyploviricotina</taxon>
        <taxon>Insthoviricetes</taxon>
        <taxon>Articulavirales</taxon>
        <taxon>Orthomyxoviridae</taxon>
        <taxon>Betainfluenzavirus</taxon>
        <taxon>Betainfluenzavirus influenzae</taxon>
        <taxon>Influenza B virus</taxon>
    </lineage>
</organism>
<proteinExistence type="inferred from homology"/>
<reference key="1">
    <citation type="submission" date="1989-01" db="EMBL/GenBank/DDBJ databases">
        <authorList>
            <person name="Ritchie L.R."/>
            <person name="Air G.M."/>
        </authorList>
    </citation>
    <scope>NUCLEOTIDE SEQUENCE [GENOMIC RNA]</scope>
</reference>
<keyword id="KW-1015">Disulfide bond</keyword>
<keyword id="KW-1170">Fusion of virus membrane with host endosomal membrane</keyword>
<keyword id="KW-1168">Fusion of virus membrane with host membrane</keyword>
<keyword id="KW-0325">Glycoprotein</keyword>
<keyword id="KW-0348">Hemagglutinin</keyword>
<keyword id="KW-1032">Host cell membrane</keyword>
<keyword id="KW-1043">Host membrane</keyword>
<keyword id="KW-0945">Host-virus interaction</keyword>
<keyword id="KW-0449">Lipoprotein</keyword>
<keyword id="KW-0472">Membrane</keyword>
<keyword id="KW-0564">Palmitate</keyword>
<keyword id="KW-0812">Transmembrane</keyword>
<keyword id="KW-1133">Transmembrane helix</keyword>
<keyword id="KW-1161">Viral attachment to host cell</keyword>
<keyword id="KW-0261">Viral envelope protein</keyword>
<keyword id="KW-1162">Viral penetration into host cytoplasm</keyword>
<keyword id="KW-0946">Virion</keyword>
<keyword id="KW-1164">Virus endocytosis by host</keyword>
<keyword id="KW-1160">Virus entry into host cell</keyword>
<dbReference type="EMBL" id="X13551">
    <property type="protein sequence ID" value="CAA31903.1"/>
    <property type="molecule type" value="Genomic_RNA"/>
</dbReference>
<dbReference type="PIR" id="S03299">
    <property type="entry name" value="S03299"/>
</dbReference>
<dbReference type="SMR" id="P09765"/>
<dbReference type="GlyCosmos" id="P09765">
    <property type="glycosylation" value="9 sites, No reported glycans"/>
</dbReference>
<dbReference type="GO" id="GO:0020002">
    <property type="term" value="C:host cell plasma membrane"/>
    <property type="evidence" value="ECO:0007669"/>
    <property type="project" value="UniProtKB-SubCell"/>
</dbReference>
<dbReference type="GO" id="GO:0016020">
    <property type="term" value="C:membrane"/>
    <property type="evidence" value="ECO:0007669"/>
    <property type="project" value="UniProtKB-KW"/>
</dbReference>
<dbReference type="GO" id="GO:0019031">
    <property type="term" value="C:viral envelope"/>
    <property type="evidence" value="ECO:0007669"/>
    <property type="project" value="UniProtKB-KW"/>
</dbReference>
<dbReference type="GO" id="GO:0055036">
    <property type="term" value="C:virion membrane"/>
    <property type="evidence" value="ECO:0007669"/>
    <property type="project" value="UniProtKB-SubCell"/>
</dbReference>
<dbReference type="GO" id="GO:0046789">
    <property type="term" value="F:host cell surface receptor binding"/>
    <property type="evidence" value="ECO:0007669"/>
    <property type="project" value="InterPro"/>
</dbReference>
<dbReference type="GO" id="GO:0075509">
    <property type="term" value="P:endocytosis involved in viral entry into host cell"/>
    <property type="evidence" value="ECO:0007669"/>
    <property type="project" value="UniProtKB-KW"/>
</dbReference>
<dbReference type="GO" id="GO:0039654">
    <property type="term" value="P:fusion of virus membrane with host endosome membrane"/>
    <property type="evidence" value="ECO:0007669"/>
    <property type="project" value="UniProtKB-KW"/>
</dbReference>
<dbReference type="GO" id="GO:0019064">
    <property type="term" value="P:fusion of virus membrane with host plasma membrane"/>
    <property type="evidence" value="ECO:0007669"/>
    <property type="project" value="InterPro"/>
</dbReference>
<dbReference type="GO" id="GO:0019062">
    <property type="term" value="P:virion attachment to host cell"/>
    <property type="evidence" value="ECO:0007669"/>
    <property type="project" value="UniProtKB-KW"/>
</dbReference>
<dbReference type="Gene3D" id="3.90.20.10">
    <property type="match status" value="1"/>
</dbReference>
<dbReference type="Gene3D" id="3.90.209.20">
    <property type="match status" value="1"/>
</dbReference>
<dbReference type="Gene3D" id="2.10.77.10">
    <property type="entry name" value="Hemagglutinin Chain A, Domain 2"/>
    <property type="match status" value="1"/>
</dbReference>
<dbReference type="HAMAP" id="MF_04072">
    <property type="entry name" value="INFV_HEMA"/>
    <property type="match status" value="1"/>
</dbReference>
<dbReference type="InterPro" id="IPR008980">
    <property type="entry name" value="Capsid_hemagglutn"/>
</dbReference>
<dbReference type="InterPro" id="IPR013828">
    <property type="entry name" value="Hemagglutn_HA1_a/b_dom_sf"/>
</dbReference>
<dbReference type="InterPro" id="IPR001364">
    <property type="entry name" value="Hemagglutn_influenz_A/B"/>
</dbReference>
<dbReference type="InterPro" id="IPR000386">
    <property type="entry name" value="Hemagglutn_influenz_B"/>
</dbReference>
<dbReference type="Pfam" id="PF00509">
    <property type="entry name" value="Hemagglutinin"/>
    <property type="match status" value="1"/>
</dbReference>
<dbReference type="PRINTS" id="PR00329">
    <property type="entry name" value="HEMAGGLUTN12"/>
</dbReference>
<dbReference type="PRINTS" id="PR00331">
    <property type="entry name" value="HEMAGGLUTN2"/>
</dbReference>
<dbReference type="SUPFAM" id="SSF58064">
    <property type="entry name" value="Influenza hemagglutinin (stalk)"/>
    <property type="match status" value="1"/>
</dbReference>
<dbReference type="SUPFAM" id="SSF49818">
    <property type="entry name" value="Viral protein domain"/>
    <property type="match status" value="1"/>
</dbReference>
<gene>
    <name evidence="1" type="primary">HA</name>
</gene>
<accession>P09765</accession>
<comment type="function">
    <text evidence="1">Binds to sialic acid-containing receptors on the cell surface, bringing about the attachment of the virus particle to the cell. Plays a major role in the determination of host range restriction and virulence. Class I viral fusion protein. Responsible for penetration of the virus into the cell cytoplasm by mediating the fusion of the membrane of the endocytosed virus particle with the endosomal membrane. Low pH in endosomes induce an irreversible conformational change in HA2, releasing the fusion hydrophobic peptide. Several trimers are required to form a competent fusion pore.</text>
</comment>
<comment type="subunit">
    <text evidence="1">Homotrimer of disulfide-linked HA1-HA2.</text>
</comment>
<comment type="subcellular location">
    <subcellularLocation>
        <location evidence="1">Virion membrane</location>
        <topology evidence="1">Single-pass type I membrane protein</topology>
    </subcellularLocation>
    <subcellularLocation>
        <location evidence="1">Host apical cell membrane</location>
        <topology evidence="1">Single-pass type I membrane protein</topology>
    </subcellularLocation>
    <text evidence="1">Targeted to the apical plasma membrane in epithelial polarized cells through a signal present in the transmembrane domain. Associated with glycosphingolipid- and cholesterol-enriched detergent-resistant lipid rafts.</text>
</comment>
<comment type="PTM">
    <text evidence="1">Palmitoylated.</text>
</comment>
<comment type="PTM">
    <text evidence="1">In natural infection, inactive HA is matured into HA1 and HA2 outside the cell by one or more trypsin-like, arginine-specific endoprotease secreted by the bronchial epithelial cells. One identified protease that may be involved in this process is secreted in lungs by club cells.</text>
</comment>
<comment type="miscellaneous">
    <text>Major glycoprotein, comprises over 80% of the envelope proteins present in virus particle.</text>
</comment>
<comment type="miscellaneous">
    <text>The extent of infection into host organism is determined by HA. Influenza viruses bud from the apical surface of polarized epithelial cells (e.g. bronchial epithelial cells) into lumen of lungs and are therefore usually pneumotropic. The reason is that HA is cleaved by tryptase clara which is restricted to lungs. However, HAs of H5 and H7 pantropic avian viruses subtypes can be cleaved by furin and subtilisin-type enzymes, allowing the virus to grow in other organs than lungs.</text>
</comment>
<comment type="miscellaneous">
    <text>The influenza B genome consist of 8 RNA segments. Genetic variation of hemagglutinin and/or neuraminidase genes results in the emergence of new influenza strains. The mechanism of variation can be the result of point mutations or the result of genetic reassortment between segments of two different strains.</text>
</comment>
<comment type="similarity">
    <text evidence="1">Belongs to the influenza viruses hemagglutinin family.</text>
</comment>
<sequence length="578" mass="62346">LMVVTSNADRICTGITSSNSPHVVKTATQGEVNVTGVIPLTTTPTKSHFANLKGTKTRGKLCPKCLNCTDLDVAFGRPKCMGTIPSAKASILHEVKPVTSGCFPIMHDRTKIRQLPNLLRGYENIRLSTHNVINAETAPGGPYIVGTSGSCPNVTNGNGFFATMAWAVPKNNNNKTATNPLTVEVPFICTEGEDQITVWGFHSDNEIQMVKLYGDSKPQKFTSSANGVTTHYVSQIGGFPKQAEDGGLPQSGRIVVDYMVQKSGKTGTITYQRGILLPQKVWCASGRSKVIKGSLPLIGEADCLHEKYGGLNKSKPYYTGEHAKAIGNCPIWVKTPLKLANGTKYRPPAKLLKERGFFGAIAGFLEGGWEGMIAGWHGYTSHGAHGVAVAADLKSTQEAINKITKNLNSLSELEVKNLQRLSGAMDELHNEILELDEKVDNLRADTISSQIELAVLLSNEGIINSEDEHLLALERKLKKMLGPSAVDIGNGCFETKHKCNQTCLDRIAAGTFNAGEFSLPTFDSLNITAASLNDDGLDNHTILLYYSTAASSLAVTLMIAIFIVYMVSRDNVSCSICL</sequence>